<evidence type="ECO:0000250" key="1"/>
<evidence type="ECO:0000305" key="2"/>
<sequence length="450" mass="48067">MSKVIGIDLGTTNSVVAVMEGGEPTVITNTEGSRLTPSVVGFSKTGERLVGQLAKRQAVSNPENTISSIKRHMGESYTVDIQGKKYTPQEISAMILQKLKEDAESYLGEKVTQAVITVPAYFNDGQRQATKDAGKIAGLDVLRIVNEPTAAALAYGLDKGGDGKILVFDLGGGTFDVSILELGDGVFEVKATNGNTHLGGDDFDNKVMEWMISEFKKETGIDLSQDKMAEQRLKEAAEKAKIELSTVLSTNINLPFITADATGPKHLDLTLTRAKFNELTEDLVQATMEPTKKAIADSGFTIDEIDKIILVGGSSRIPAVQEAIKSILGKEPSKGVNPDECVAIGAAIQAGVLVGDVKDVLLLDVTPLSLGIETLGGVFTKIIDRNTTIPTSRSQVFSTAVDNQPSVDVHVLQGRREMAADNKTLGRFELTGIPAAPRGVPRIEVTFNID</sequence>
<comment type="function">
    <text evidence="1">Acts as a chaperone.</text>
</comment>
<comment type="induction">
    <text evidence="1">By stress conditions e.g. heat shock (By similarity).</text>
</comment>
<comment type="similarity">
    <text evidence="2">Belongs to the heat shock protein 70 family.</text>
</comment>
<gene>
    <name type="primary">dnaK</name>
</gene>
<accession>Q9ZIV1</accession>
<name>DNAK_MEGEL</name>
<keyword id="KW-0067">ATP-binding</keyword>
<keyword id="KW-0143">Chaperone</keyword>
<keyword id="KW-0547">Nucleotide-binding</keyword>
<keyword id="KW-0597">Phosphoprotein</keyword>
<keyword id="KW-0346">Stress response</keyword>
<reference key="1">
    <citation type="submission" date="1997-07" db="EMBL/GenBank/DDBJ databases">
        <title>The phylogeny of prokaryotes: a new proposal for the classification of organisms at the highest taxa level integrating phylogenetic and phenotypic characteristics.</title>
        <authorList>
            <person name="Gupta R.S."/>
        </authorList>
    </citation>
    <scope>NUCLEOTIDE SEQUENCE [GENOMIC DNA]</scope>
    <source>
        <strain>ATCC 25940 / DSM 20460 / JCM 1772 / NCIB 8927</strain>
    </source>
</reference>
<dbReference type="EMBL" id="AF013113">
    <property type="protein sequence ID" value="AAC77524.1"/>
    <property type="molecule type" value="Genomic_DNA"/>
</dbReference>
<dbReference type="SMR" id="Q9ZIV1"/>
<dbReference type="GO" id="GO:0005524">
    <property type="term" value="F:ATP binding"/>
    <property type="evidence" value="ECO:0007669"/>
    <property type="project" value="UniProtKB-KW"/>
</dbReference>
<dbReference type="GO" id="GO:0140662">
    <property type="term" value="F:ATP-dependent protein folding chaperone"/>
    <property type="evidence" value="ECO:0007669"/>
    <property type="project" value="InterPro"/>
</dbReference>
<dbReference type="CDD" id="cd10234">
    <property type="entry name" value="ASKHA_NBD_HSP70_DnaK-like"/>
    <property type="match status" value="1"/>
</dbReference>
<dbReference type="FunFam" id="3.30.420.40:FF:000071">
    <property type="entry name" value="Molecular chaperone DnaK"/>
    <property type="match status" value="1"/>
</dbReference>
<dbReference type="FunFam" id="3.90.640.10:FF:000003">
    <property type="entry name" value="Molecular chaperone DnaK"/>
    <property type="match status" value="1"/>
</dbReference>
<dbReference type="Gene3D" id="3.30.420.40">
    <property type="match status" value="2"/>
</dbReference>
<dbReference type="Gene3D" id="3.90.640.10">
    <property type="entry name" value="Actin, Chain A, domain 4"/>
    <property type="match status" value="1"/>
</dbReference>
<dbReference type="Gene3D" id="2.60.34.10">
    <property type="entry name" value="Substrate Binding Domain Of DNAk, Chain A, domain 1"/>
    <property type="match status" value="1"/>
</dbReference>
<dbReference type="InterPro" id="IPR043129">
    <property type="entry name" value="ATPase_NBD"/>
</dbReference>
<dbReference type="InterPro" id="IPR018181">
    <property type="entry name" value="Heat_shock_70_CS"/>
</dbReference>
<dbReference type="InterPro" id="IPR029047">
    <property type="entry name" value="HSP70_peptide-bd_sf"/>
</dbReference>
<dbReference type="InterPro" id="IPR013126">
    <property type="entry name" value="Hsp_70_fam"/>
</dbReference>
<dbReference type="NCBIfam" id="NF001413">
    <property type="entry name" value="PRK00290.1"/>
    <property type="match status" value="1"/>
</dbReference>
<dbReference type="PANTHER" id="PTHR19375">
    <property type="entry name" value="HEAT SHOCK PROTEIN 70KDA"/>
    <property type="match status" value="1"/>
</dbReference>
<dbReference type="Pfam" id="PF00012">
    <property type="entry name" value="HSP70"/>
    <property type="match status" value="2"/>
</dbReference>
<dbReference type="PRINTS" id="PR00301">
    <property type="entry name" value="HEATSHOCK70"/>
</dbReference>
<dbReference type="SUPFAM" id="SSF53067">
    <property type="entry name" value="Actin-like ATPase domain"/>
    <property type="match status" value="2"/>
</dbReference>
<dbReference type="SUPFAM" id="SSF100920">
    <property type="entry name" value="Heat shock protein 70kD (HSP70), peptide-binding domain"/>
    <property type="match status" value="1"/>
</dbReference>
<dbReference type="PROSITE" id="PS00297">
    <property type="entry name" value="HSP70_1"/>
    <property type="match status" value="1"/>
</dbReference>
<dbReference type="PROSITE" id="PS00329">
    <property type="entry name" value="HSP70_2"/>
    <property type="match status" value="1"/>
</dbReference>
<dbReference type="PROSITE" id="PS01036">
    <property type="entry name" value="HSP70_3"/>
    <property type="match status" value="1"/>
</dbReference>
<organism>
    <name type="scientific">Megasphaera elsdenii</name>
    <dbReference type="NCBI Taxonomy" id="907"/>
    <lineage>
        <taxon>Bacteria</taxon>
        <taxon>Bacillati</taxon>
        <taxon>Bacillota</taxon>
        <taxon>Negativicutes</taxon>
        <taxon>Veillonellales</taxon>
        <taxon>Veillonellaceae</taxon>
        <taxon>Megasphaera</taxon>
    </lineage>
</organism>
<feature type="chain" id="PRO_0000078485" description="Chaperone protein DnaK">
    <location>
        <begin position="1"/>
        <end position="450" status="greater than"/>
    </location>
</feature>
<feature type="modified residue" description="Phosphothreonine; by autocatalysis" evidence="1">
    <location>
        <position position="174"/>
    </location>
</feature>
<feature type="non-terminal residue">
    <location>
        <position position="450"/>
    </location>
</feature>
<protein>
    <recommendedName>
        <fullName>Chaperone protein DnaK</fullName>
    </recommendedName>
    <alternativeName>
        <fullName>HSP70</fullName>
    </alternativeName>
    <alternativeName>
        <fullName>Heat shock 70 kDa protein</fullName>
    </alternativeName>
    <alternativeName>
        <fullName>Heat shock protein 70</fullName>
    </alternativeName>
</protein>
<proteinExistence type="inferred from homology"/>